<keyword id="KW-1199">Hemostasis impairing toxin</keyword>
<keyword id="KW-1201">Platelet aggregation inhibiting toxin</keyword>
<keyword id="KW-1185">Reference proteome</keyword>
<keyword id="KW-0964">Secreted</keyword>
<keyword id="KW-0732">Signal</keyword>
<keyword id="KW-0800">Toxin</keyword>
<keyword id="KW-0838">Vasoactive</keyword>
<keyword id="KW-0840">Vasodilator</keyword>
<protein>
    <recommendedName>
        <fullName evidence="7">Long form salivary protein D7L3</fullName>
        <shortName evidence="5">AngaD7L3</shortName>
    </recommendedName>
</protein>
<feature type="signal peptide" evidence="2">
    <location>
        <begin position="1"/>
        <end position="26"/>
    </location>
</feature>
<feature type="chain" id="PRO_0000460140" description="Long form salivary protein D7L3" evidence="2">
    <location>
        <begin position="27"/>
        <end position="354"/>
    </location>
</feature>
<organism evidence="8">
    <name type="scientific">Anopheles gambiae</name>
    <name type="common">African malaria mosquito</name>
    <dbReference type="NCBI Taxonomy" id="7165"/>
    <lineage>
        <taxon>Eukaryota</taxon>
        <taxon>Metazoa</taxon>
        <taxon>Ecdysozoa</taxon>
        <taxon>Arthropoda</taxon>
        <taxon>Hexapoda</taxon>
        <taxon>Insecta</taxon>
        <taxon>Pterygota</taxon>
        <taxon>Neoptera</taxon>
        <taxon>Endopterygota</taxon>
        <taxon>Diptera</taxon>
        <taxon>Nematocera</taxon>
        <taxon>Culicoidea</taxon>
        <taxon>Culicidae</taxon>
        <taxon>Anophelinae</taxon>
        <taxon>Anopheles</taxon>
    </lineage>
</organism>
<accession>A0A1S4HE90</accession>
<name>D7L3_ANOGA</name>
<reference evidence="8" key="1">
    <citation type="journal article" date="2002" name="Science">
        <title>The genome sequence of the malaria mosquito Anopheles gambiae.</title>
        <authorList>
            <person name="Holt R.A."/>
            <person name="Subramanian G.M."/>
            <person name="Halpern A."/>
            <person name="Sutton G.G."/>
            <person name="Charlab R."/>
            <person name="Nusskern D.R."/>
            <person name="Wincker P."/>
            <person name="Clark A.G."/>
            <person name="Ribeiro J.M.C."/>
            <person name="Wides R."/>
            <person name="Salzberg S.L."/>
            <person name="Loftus B.J."/>
            <person name="Yandell M.D."/>
            <person name="Majoros W.H."/>
            <person name="Rusch D.B."/>
            <person name="Lai Z."/>
            <person name="Kraft C.L."/>
            <person name="Abril J.F."/>
            <person name="Anthouard V."/>
            <person name="Arensburger P."/>
            <person name="Atkinson P.W."/>
            <person name="Baden H."/>
            <person name="de Berardinis V."/>
            <person name="Baldwin D."/>
            <person name="Benes V."/>
            <person name="Biedler J."/>
            <person name="Blass C."/>
            <person name="Bolanos R."/>
            <person name="Boscus D."/>
            <person name="Barnstead M."/>
            <person name="Cai S."/>
            <person name="Center A."/>
            <person name="Chaturverdi K."/>
            <person name="Christophides G.K."/>
            <person name="Chrystal M.A.M."/>
            <person name="Clamp M."/>
            <person name="Cravchik A."/>
            <person name="Curwen V."/>
            <person name="Dana A."/>
            <person name="Delcher A."/>
            <person name="Dew I."/>
            <person name="Evans C.A."/>
            <person name="Flanigan M."/>
            <person name="Grundschober-Freimoser A."/>
            <person name="Friedli L."/>
            <person name="Gu Z."/>
            <person name="Guan P."/>
            <person name="Guigo R."/>
            <person name="Hillenmeyer M.E."/>
            <person name="Hladun S.L."/>
            <person name="Hogan J.R."/>
            <person name="Hong Y.S."/>
            <person name="Hoover J."/>
            <person name="Jaillon O."/>
            <person name="Ke Z."/>
            <person name="Kodira C.D."/>
            <person name="Kokoza E."/>
            <person name="Koutsos A."/>
            <person name="Letunic I."/>
            <person name="Levitsky A.A."/>
            <person name="Liang Y."/>
            <person name="Lin J.-J."/>
            <person name="Lobo N.F."/>
            <person name="Lopez J.R."/>
            <person name="Malek J.A."/>
            <person name="McIntosh T.C."/>
            <person name="Meister S."/>
            <person name="Miller J.R."/>
            <person name="Mobarry C."/>
            <person name="Mongin E."/>
            <person name="Murphy S.D."/>
            <person name="O'Brochta D.A."/>
            <person name="Pfannkoch C."/>
            <person name="Qi R."/>
            <person name="Regier M.A."/>
            <person name="Remington K."/>
            <person name="Shao H."/>
            <person name="Sharakhova M.V."/>
            <person name="Sitter C.D."/>
            <person name="Shetty J."/>
            <person name="Smith T.J."/>
            <person name="Strong R."/>
            <person name="Sun J."/>
            <person name="Thomasova D."/>
            <person name="Ton L.Q."/>
            <person name="Topalis P."/>
            <person name="Tu Z.J."/>
            <person name="Unger M.F."/>
            <person name="Walenz B."/>
            <person name="Wang A.H."/>
            <person name="Wang J."/>
            <person name="Wang M."/>
            <person name="Wang X."/>
            <person name="Woodford K.J."/>
            <person name="Wortman J.R."/>
            <person name="Wu M."/>
            <person name="Yao A."/>
            <person name="Zdobnov E.M."/>
            <person name="Zhang H."/>
            <person name="Zhao Q."/>
            <person name="Zhao S."/>
            <person name="Zhu S.C."/>
            <person name="Zhimulev I."/>
            <person name="Coluzzi M."/>
            <person name="della Torre A."/>
            <person name="Roth C.W."/>
            <person name="Louis C."/>
            <person name="Kalush F."/>
            <person name="Mural R.J."/>
            <person name="Myers E.W."/>
            <person name="Adams M.D."/>
            <person name="Smith H.O."/>
            <person name="Broder S."/>
            <person name="Gardner M.J."/>
            <person name="Fraser C.M."/>
            <person name="Birney E."/>
            <person name="Bork P."/>
            <person name="Brey P.T."/>
            <person name="Venter J.C."/>
            <person name="Weissenbach J."/>
            <person name="Kafatos F.C."/>
            <person name="Collins F.H."/>
            <person name="Hoffman S.L."/>
        </authorList>
    </citation>
    <scope>NUCLEOTIDE SEQUENCE [LARGE SCALE GENOMIC DNA]</scope>
    <source>
        <strain evidence="8">PEST</strain>
    </source>
</reference>
<reference evidence="7" key="2">
    <citation type="journal article" date="2022" name="Insect Biochem. Mol. Biol.">
        <title>Functional aspects of evolution in a cluster of salivary protein genes from mosquitoes.</title>
        <authorList>
            <person name="Alvarenga P.H."/>
            <person name="Dias D.R."/>
            <person name="Xu X."/>
            <person name="Francischetti I.M.B."/>
            <person name="Gittis A.G."/>
            <person name="Arp G."/>
            <person name="Garboczi D.N."/>
            <person name="Ribeiro J.M.C."/>
            <person name="Andersen J.F."/>
        </authorList>
    </citation>
    <scope>FUNCTION</scope>
</reference>
<reference evidence="7" key="3">
    <citation type="journal article" date="2022" name="J. Biol. Chem.">
        <title>Novel salivary antihemostatic activities of long-form D7 proteins from the malaria vector Anopheles gambiae facilitate hematophagy.</title>
        <authorList>
            <person name="Smith L.B."/>
            <person name="Duge E."/>
            <person name="Valenzuela-Leon P.C."/>
            <person name="Brooks S."/>
            <person name="Martin-Martin I."/>
            <person name="Ackerman H."/>
            <person name="Calvo E."/>
        </authorList>
    </citation>
    <scope>FUNCTION</scope>
</reference>
<proteinExistence type="inferred from homology"/>
<sequence>MQLTPRSVHLVHLLLAATTLISPSWSNHQSQQPALQALSPDDTLFAHLRCFELFASGQQSRDRDADAADWLGGNRERYLHRVERTPAFVKCVLGRMHFYDSSERRFNVNILRTQYNAYKQWMTLSEEDVDDFIHEVSNIGALNSSNDAEVYDALKLLFTNHSVSFFQLFLRDPTVLQNMYDDKSLSVRKPNQTVVQFCELQMAAELWDDICLIRAYQISNHTEAMERHIACIFRGFQYLDANSSIDVKEIVRDYELTETLDEASKNSIEECARNASEKDDIPKRSLAMYSCLLDGSHSEVFKKAFDFREVRSGNLTFLVQNLPYDRDQVRQQILALDKEHCNDQQPLAGRFIED</sequence>
<comment type="function">
    <text evidence="1 3 4">Modulates blood feeding of female mosquitoes on vertebrate species by binding and sequestering different mediators involved in the host response (By similarity). Binds serotonin with high affinity (PubMed:35460690, PubMed:35568118). Binds weakly noradrenaline and histamine (PubMed:35568118). Does not bind tryptamine, octopamine, dopamine, adrenaline, leukotriene C4, leukotriene D4, leukotriene B4, ADP and U-46619, a stable analog of thromboxane A2 (PubMed:35568118). Inhibits agonist-induced platelet aggregation (PubMed:35460690). Exhibits vasodilating activity (PubMed:35460690).</text>
</comment>
<comment type="subcellular location">
    <subcellularLocation>
        <location evidence="7">Secreted</location>
    </subcellularLocation>
</comment>
<comment type="similarity">
    <text evidence="7">Belongs to the PBP/GOBP family.</text>
</comment>
<dbReference type="EMBL" id="AAAB01008964">
    <property type="status" value="NOT_ANNOTATED_CDS"/>
    <property type="molecule type" value="Genomic_DNA"/>
</dbReference>
<dbReference type="SMR" id="A0A1S4HE90"/>
<dbReference type="EnsemblMetazoa" id="AGAP028120-RA">
    <property type="protein sequence ID" value="AGAP028120-PA"/>
    <property type="gene ID" value="AGAP028120"/>
</dbReference>
<dbReference type="VEuPathDB" id="VectorBase:AGAMI1_006492"/>
<dbReference type="VEuPathDB" id="VectorBase:AGAP028120"/>
<dbReference type="InParanoid" id="A0A1S4HE90"/>
<dbReference type="OMA" id="CAARNYS"/>
<dbReference type="Proteomes" id="UP000007062">
    <property type="component" value="Chromosome 3R"/>
</dbReference>
<dbReference type="GO" id="GO:0005576">
    <property type="term" value="C:extracellular region"/>
    <property type="evidence" value="ECO:0007669"/>
    <property type="project" value="UniProtKB-SubCell"/>
</dbReference>
<dbReference type="GO" id="GO:0005549">
    <property type="term" value="F:odorant binding"/>
    <property type="evidence" value="ECO:0007669"/>
    <property type="project" value="InterPro"/>
</dbReference>
<dbReference type="GO" id="GO:0090729">
    <property type="term" value="F:toxin activity"/>
    <property type="evidence" value="ECO:0007669"/>
    <property type="project" value="UniProtKB-KW"/>
</dbReference>
<dbReference type="GO" id="GO:0042311">
    <property type="term" value="P:vasodilation"/>
    <property type="evidence" value="ECO:0007669"/>
    <property type="project" value="UniProtKB-KW"/>
</dbReference>
<dbReference type="Gene3D" id="1.10.238.20">
    <property type="entry name" value="Pheromone/general odorant binding protein domain"/>
    <property type="match status" value="2"/>
</dbReference>
<dbReference type="InterPro" id="IPR006170">
    <property type="entry name" value="PBP/GOBP"/>
</dbReference>
<dbReference type="InterPro" id="IPR036728">
    <property type="entry name" value="PBP_GOBP_sf"/>
</dbReference>
<dbReference type="Pfam" id="PF01395">
    <property type="entry name" value="PBP_GOBP"/>
    <property type="match status" value="1"/>
</dbReference>
<dbReference type="SUPFAM" id="SSF47565">
    <property type="entry name" value="Insect pheromone/odorant-binding proteins"/>
    <property type="match status" value="1"/>
</dbReference>
<gene>
    <name evidence="6" type="primary">7DL3</name>
</gene>
<evidence type="ECO:0000250" key="1">
    <source>
        <dbReference type="UniProtKB" id="P18153"/>
    </source>
</evidence>
<evidence type="ECO:0000255" key="2"/>
<evidence type="ECO:0000269" key="3">
    <source>
    </source>
</evidence>
<evidence type="ECO:0000269" key="4">
    <source>
    </source>
</evidence>
<evidence type="ECO:0000303" key="5">
    <source>
    </source>
</evidence>
<evidence type="ECO:0000303" key="6">
    <source>
    </source>
</evidence>
<evidence type="ECO:0000305" key="7"/>
<evidence type="ECO:0000312" key="8">
    <source>
        <dbReference type="Proteomes" id="UP000007062"/>
    </source>
</evidence>